<accession>Q62523</accession>
<accession>P70461</accession>
<accession>Q3UGQ3</accession>
<gene>
    <name type="primary">Zyx</name>
</gene>
<dbReference type="EMBL" id="Y07711">
    <property type="protein sequence ID" value="CAA68984.1"/>
    <property type="molecule type" value="mRNA"/>
</dbReference>
<dbReference type="EMBL" id="X99063">
    <property type="protein sequence ID" value="CAA67510.1"/>
    <property type="molecule type" value="mRNA"/>
</dbReference>
<dbReference type="EMBL" id="AK147812">
    <property type="protein sequence ID" value="BAE28154.1"/>
    <property type="molecule type" value="mRNA"/>
</dbReference>
<dbReference type="EMBL" id="CH466533">
    <property type="protein sequence ID" value="EDL13482.1"/>
    <property type="molecule type" value="Genomic_DNA"/>
</dbReference>
<dbReference type="CCDS" id="CCDS20066.1"/>
<dbReference type="RefSeq" id="NP_001276546.1">
    <property type="nucleotide sequence ID" value="NM_001289617.2"/>
</dbReference>
<dbReference type="RefSeq" id="NP_001276547.1">
    <property type="nucleotide sequence ID" value="NM_001289618.1"/>
</dbReference>
<dbReference type="RefSeq" id="NP_001276548.1">
    <property type="nucleotide sequence ID" value="NM_001289619.1"/>
</dbReference>
<dbReference type="RefSeq" id="NP_001402731.1">
    <property type="nucleotide sequence ID" value="NM_001415802.1"/>
</dbReference>
<dbReference type="RefSeq" id="NP_035907.1">
    <property type="nucleotide sequence ID" value="NM_011777.4"/>
</dbReference>
<dbReference type="RefSeq" id="XP_006505999.1">
    <property type="nucleotide sequence ID" value="XM_006505936.3"/>
</dbReference>
<dbReference type="SMR" id="Q62523"/>
<dbReference type="BioGRID" id="204712">
    <property type="interactions" value="22"/>
</dbReference>
<dbReference type="FunCoup" id="Q62523">
    <property type="interactions" value="907"/>
</dbReference>
<dbReference type="IntAct" id="Q62523">
    <property type="interactions" value="1"/>
</dbReference>
<dbReference type="STRING" id="10090.ENSMUSP00000126622"/>
<dbReference type="GlyGen" id="Q62523">
    <property type="glycosylation" value="9 sites, 1 N-linked glycan (1 site), 1 O-linked glycan (7 sites)"/>
</dbReference>
<dbReference type="iPTMnet" id="Q62523"/>
<dbReference type="PhosphoSitePlus" id="Q62523"/>
<dbReference type="SwissPalm" id="Q62523"/>
<dbReference type="jPOST" id="Q62523"/>
<dbReference type="PaxDb" id="10090-ENSMUSP00000126622"/>
<dbReference type="PeptideAtlas" id="Q62523"/>
<dbReference type="ProteomicsDB" id="275172"/>
<dbReference type="Pumba" id="Q62523"/>
<dbReference type="Antibodypedia" id="1394">
    <property type="antibodies" value="389 antibodies from 42 providers"/>
</dbReference>
<dbReference type="DNASU" id="22793"/>
<dbReference type="Ensembl" id="ENSMUST00000164375.4">
    <property type="protein sequence ID" value="ENSMUSP00000126622.2"/>
    <property type="gene ID" value="ENSMUSG00000029860.17"/>
</dbReference>
<dbReference type="Ensembl" id="ENSMUST00000203652.3">
    <property type="protein sequence ID" value="ENSMUSP00000145451.2"/>
    <property type="gene ID" value="ENSMUSG00000029860.17"/>
</dbReference>
<dbReference type="GeneID" id="22793"/>
<dbReference type="KEGG" id="mmu:22793"/>
<dbReference type="UCSC" id="uc009bqz.2">
    <property type="organism name" value="mouse"/>
</dbReference>
<dbReference type="AGR" id="MGI:103072"/>
<dbReference type="CTD" id="7791"/>
<dbReference type="MGI" id="MGI:103072">
    <property type="gene designation" value="Zyx"/>
</dbReference>
<dbReference type="VEuPathDB" id="HostDB:ENSMUSG00000029860"/>
<dbReference type="eggNOG" id="KOG1701">
    <property type="taxonomic scope" value="Eukaryota"/>
</dbReference>
<dbReference type="GeneTree" id="ENSGT00940000154273"/>
<dbReference type="HOGENOM" id="CLU_001357_10_2_1"/>
<dbReference type="InParanoid" id="Q62523"/>
<dbReference type="OMA" id="YAPKCSV"/>
<dbReference type="OrthoDB" id="25414at2759"/>
<dbReference type="PhylomeDB" id="Q62523"/>
<dbReference type="TreeFam" id="TF320310"/>
<dbReference type="BioGRID-ORCS" id="22793">
    <property type="hits" value="2 hits in 79 CRISPR screens"/>
</dbReference>
<dbReference type="ChiTaRS" id="Zyx">
    <property type="organism name" value="mouse"/>
</dbReference>
<dbReference type="PRO" id="PR:Q62523"/>
<dbReference type="Proteomes" id="UP000000589">
    <property type="component" value="Chromosome 6"/>
</dbReference>
<dbReference type="RNAct" id="Q62523">
    <property type="molecule type" value="protein"/>
</dbReference>
<dbReference type="Bgee" id="ENSMUSG00000029860">
    <property type="expression patterns" value="Expressed in granulocyte and 244 other cell types or tissues"/>
</dbReference>
<dbReference type="ExpressionAtlas" id="Q62523">
    <property type="expression patterns" value="baseline and differential"/>
</dbReference>
<dbReference type="GO" id="GO:0005912">
    <property type="term" value="C:adherens junction"/>
    <property type="evidence" value="ECO:0000266"/>
    <property type="project" value="MGI"/>
</dbReference>
<dbReference type="GO" id="GO:0005829">
    <property type="term" value="C:cytosol"/>
    <property type="evidence" value="ECO:0007669"/>
    <property type="project" value="Ensembl"/>
</dbReference>
<dbReference type="GO" id="GO:0005925">
    <property type="term" value="C:focal adhesion"/>
    <property type="evidence" value="ECO:0000314"/>
    <property type="project" value="MGI"/>
</dbReference>
<dbReference type="GO" id="GO:0005634">
    <property type="term" value="C:nucleus"/>
    <property type="evidence" value="ECO:0007669"/>
    <property type="project" value="UniProtKB-SubCell"/>
</dbReference>
<dbReference type="GO" id="GO:0045335">
    <property type="term" value="C:phagocytic vesicle"/>
    <property type="evidence" value="ECO:0000314"/>
    <property type="project" value="MGI"/>
</dbReference>
<dbReference type="GO" id="GO:0005886">
    <property type="term" value="C:plasma membrane"/>
    <property type="evidence" value="ECO:0007669"/>
    <property type="project" value="Ensembl"/>
</dbReference>
<dbReference type="GO" id="GO:0001725">
    <property type="term" value="C:stress fiber"/>
    <property type="evidence" value="ECO:0007669"/>
    <property type="project" value="Ensembl"/>
</dbReference>
<dbReference type="GO" id="GO:0046872">
    <property type="term" value="F:metal ion binding"/>
    <property type="evidence" value="ECO:0007669"/>
    <property type="project" value="UniProtKB-KW"/>
</dbReference>
<dbReference type="GO" id="GO:0007160">
    <property type="term" value="P:cell-matrix adhesion"/>
    <property type="evidence" value="ECO:0000315"/>
    <property type="project" value="UniProtKB"/>
</dbReference>
<dbReference type="GO" id="GO:0071346">
    <property type="term" value="P:cellular response to type II interferon"/>
    <property type="evidence" value="ECO:0000314"/>
    <property type="project" value="MGI"/>
</dbReference>
<dbReference type="GO" id="GO:0007229">
    <property type="term" value="P:integrin-mediated signaling pathway"/>
    <property type="evidence" value="ECO:0000315"/>
    <property type="project" value="UniProtKB"/>
</dbReference>
<dbReference type="GO" id="GO:0043149">
    <property type="term" value="P:stress fiber assembly"/>
    <property type="evidence" value="ECO:0007669"/>
    <property type="project" value="Ensembl"/>
</dbReference>
<dbReference type="GO" id="GO:0007179">
    <property type="term" value="P:transforming growth factor beta receptor signaling pathway"/>
    <property type="evidence" value="ECO:0000315"/>
    <property type="project" value="UniProtKB"/>
</dbReference>
<dbReference type="CDD" id="cd09353">
    <property type="entry name" value="LIM2_Zyxin"/>
    <property type="match status" value="1"/>
</dbReference>
<dbReference type="CDD" id="cd09435">
    <property type="entry name" value="LIM3_Zyxin"/>
    <property type="match status" value="1"/>
</dbReference>
<dbReference type="FunFam" id="2.10.110.10:FF:000027">
    <property type="entry name" value="lipoma-preferred partner isoform X1"/>
    <property type="match status" value="1"/>
</dbReference>
<dbReference type="FunFam" id="2.10.110.10:FF:000057">
    <property type="entry name" value="Zyxin"/>
    <property type="match status" value="1"/>
</dbReference>
<dbReference type="FunFam" id="2.10.110.10:FF:000076">
    <property type="entry name" value="Zyxin"/>
    <property type="match status" value="1"/>
</dbReference>
<dbReference type="Gene3D" id="2.10.110.10">
    <property type="entry name" value="Cysteine Rich Protein"/>
    <property type="match status" value="3"/>
</dbReference>
<dbReference type="InterPro" id="IPR001781">
    <property type="entry name" value="Znf_LIM"/>
</dbReference>
<dbReference type="PANTHER" id="PTHR24212:SF1">
    <property type="entry name" value="ZYXIN"/>
    <property type="match status" value="1"/>
</dbReference>
<dbReference type="PANTHER" id="PTHR24212">
    <property type="entry name" value="ZYXIN/TRIP6"/>
    <property type="match status" value="1"/>
</dbReference>
<dbReference type="Pfam" id="PF00412">
    <property type="entry name" value="LIM"/>
    <property type="match status" value="3"/>
</dbReference>
<dbReference type="SMART" id="SM00132">
    <property type="entry name" value="LIM"/>
    <property type="match status" value="3"/>
</dbReference>
<dbReference type="SUPFAM" id="SSF57716">
    <property type="entry name" value="Glucocorticoid receptor-like (DNA-binding domain)"/>
    <property type="match status" value="2"/>
</dbReference>
<dbReference type="PROSITE" id="PS00478">
    <property type="entry name" value="LIM_DOMAIN_1"/>
    <property type="match status" value="2"/>
</dbReference>
<dbReference type="PROSITE" id="PS50023">
    <property type="entry name" value="LIM_DOMAIN_2"/>
    <property type="match status" value="3"/>
</dbReference>
<protein>
    <recommendedName>
        <fullName>Zyxin</fullName>
    </recommendedName>
</protein>
<reference key="1">
    <citation type="journal article" date="1996" name="J. Biol. Chem.">
        <title>Molecular characterization of human zyxin.</title>
        <authorList>
            <person name="Macalma T."/>
            <person name="Otte J."/>
            <person name="Hensler M.E."/>
            <person name="Bockholt S.M."/>
            <person name="Louis H.A."/>
            <person name="Kalff-Suske M."/>
            <person name="Grzeschik K.H."/>
            <person name="von der Ahe D."/>
            <person name="Beckerle M.C."/>
        </authorList>
    </citation>
    <scope>NUCLEOTIDE SEQUENCE [MRNA]</scope>
    <source>
        <strain>ICR X Swiss Webster</strain>
    </source>
</reference>
<reference key="2">
    <citation type="submission" date="1996-07" db="EMBL/GenBank/DDBJ databases">
        <authorList>
            <person name="Otte J."/>
            <person name="Heischmann A."/>
            <person name="Breier G."/>
            <person name="Beckerle M.C."/>
            <person name="von der Ahe D."/>
        </authorList>
    </citation>
    <scope>NUCLEOTIDE SEQUENCE [MRNA]</scope>
    <source>
        <tissue>Brain</tissue>
    </source>
</reference>
<reference key="3">
    <citation type="journal article" date="2005" name="Science">
        <title>The transcriptional landscape of the mammalian genome.</title>
        <authorList>
            <person name="Carninci P."/>
            <person name="Kasukawa T."/>
            <person name="Katayama S."/>
            <person name="Gough J."/>
            <person name="Frith M.C."/>
            <person name="Maeda N."/>
            <person name="Oyama R."/>
            <person name="Ravasi T."/>
            <person name="Lenhard B."/>
            <person name="Wells C."/>
            <person name="Kodzius R."/>
            <person name="Shimokawa K."/>
            <person name="Bajic V.B."/>
            <person name="Brenner S.E."/>
            <person name="Batalov S."/>
            <person name="Forrest A.R."/>
            <person name="Zavolan M."/>
            <person name="Davis M.J."/>
            <person name="Wilming L.G."/>
            <person name="Aidinis V."/>
            <person name="Allen J.E."/>
            <person name="Ambesi-Impiombato A."/>
            <person name="Apweiler R."/>
            <person name="Aturaliya R.N."/>
            <person name="Bailey T.L."/>
            <person name="Bansal M."/>
            <person name="Baxter L."/>
            <person name="Beisel K.W."/>
            <person name="Bersano T."/>
            <person name="Bono H."/>
            <person name="Chalk A.M."/>
            <person name="Chiu K.P."/>
            <person name="Choudhary V."/>
            <person name="Christoffels A."/>
            <person name="Clutterbuck D.R."/>
            <person name="Crowe M.L."/>
            <person name="Dalla E."/>
            <person name="Dalrymple B.P."/>
            <person name="de Bono B."/>
            <person name="Della Gatta G."/>
            <person name="di Bernardo D."/>
            <person name="Down T."/>
            <person name="Engstrom P."/>
            <person name="Fagiolini M."/>
            <person name="Faulkner G."/>
            <person name="Fletcher C.F."/>
            <person name="Fukushima T."/>
            <person name="Furuno M."/>
            <person name="Futaki S."/>
            <person name="Gariboldi M."/>
            <person name="Georgii-Hemming P."/>
            <person name="Gingeras T.R."/>
            <person name="Gojobori T."/>
            <person name="Green R.E."/>
            <person name="Gustincich S."/>
            <person name="Harbers M."/>
            <person name="Hayashi Y."/>
            <person name="Hensch T.K."/>
            <person name="Hirokawa N."/>
            <person name="Hill D."/>
            <person name="Huminiecki L."/>
            <person name="Iacono M."/>
            <person name="Ikeo K."/>
            <person name="Iwama A."/>
            <person name="Ishikawa T."/>
            <person name="Jakt M."/>
            <person name="Kanapin A."/>
            <person name="Katoh M."/>
            <person name="Kawasawa Y."/>
            <person name="Kelso J."/>
            <person name="Kitamura H."/>
            <person name="Kitano H."/>
            <person name="Kollias G."/>
            <person name="Krishnan S.P."/>
            <person name="Kruger A."/>
            <person name="Kummerfeld S.K."/>
            <person name="Kurochkin I.V."/>
            <person name="Lareau L.F."/>
            <person name="Lazarevic D."/>
            <person name="Lipovich L."/>
            <person name="Liu J."/>
            <person name="Liuni S."/>
            <person name="McWilliam S."/>
            <person name="Madan Babu M."/>
            <person name="Madera M."/>
            <person name="Marchionni L."/>
            <person name="Matsuda H."/>
            <person name="Matsuzawa S."/>
            <person name="Miki H."/>
            <person name="Mignone F."/>
            <person name="Miyake S."/>
            <person name="Morris K."/>
            <person name="Mottagui-Tabar S."/>
            <person name="Mulder N."/>
            <person name="Nakano N."/>
            <person name="Nakauchi H."/>
            <person name="Ng P."/>
            <person name="Nilsson R."/>
            <person name="Nishiguchi S."/>
            <person name="Nishikawa S."/>
            <person name="Nori F."/>
            <person name="Ohara O."/>
            <person name="Okazaki Y."/>
            <person name="Orlando V."/>
            <person name="Pang K.C."/>
            <person name="Pavan W.J."/>
            <person name="Pavesi G."/>
            <person name="Pesole G."/>
            <person name="Petrovsky N."/>
            <person name="Piazza S."/>
            <person name="Reed J."/>
            <person name="Reid J.F."/>
            <person name="Ring B.Z."/>
            <person name="Ringwald M."/>
            <person name="Rost B."/>
            <person name="Ruan Y."/>
            <person name="Salzberg S.L."/>
            <person name="Sandelin A."/>
            <person name="Schneider C."/>
            <person name="Schoenbach C."/>
            <person name="Sekiguchi K."/>
            <person name="Semple C.A."/>
            <person name="Seno S."/>
            <person name="Sessa L."/>
            <person name="Sheng Y."/>
            <person name="Shibata Y."/>
            <person name="Shimada H."/>
            <person name="Shimada K."/>
            <person name="Silva D."/>
            <person name="Sinclair B."/>
            <person name="Sperling S."/>
            <person name="Stupka E."/>
            <person name="Sugiura K."/>
            <person name="Sultana R."/>
            <person name="Takenaka Y."/>
            <person name="Taki K."/>
            <person name="Tammoja K."/>
            <person name="Tan S.L."/>
            <person name="Tang S."/>
            <person name="Taylor M.S."/>
            <person name="Tegner J."/>
            <person name="Teichmann S.A."/>
            <person name="Ueda H.R."/>
            <person name="van Nimwegen E."/>
            <person name="Verardo R."/>
            <person name="Wei C.L."/>
            <person name="Yagi K."/>
            <person name="Yamanishi H."/>
            <person name="Zabarovsky E."/>
            <person name="Zhu S."/>
            <person name="Zimmer A."/>
            <person name="Hide W."/>
            <person name="Bult C."/>
            <person name="Grimmond S.M."/>
            <person name="Teasdale R.D."/>
            <person name="Liu E.T."/>
            <person name="Brusic V."/>
            <person name="Quackenbush J."/>
            <person name="Wahlestedt C."/>
            <person name="Mattick J.S."/>
            <person name="Hume D.A."/>
            <person name="Kai C."/>
            <person name="Sasaki D."/>
            <person name="Tomaru Y."/>
            <person name="Fukuda S."/>
            <person name="Kanamori-Katayama M."/>
            <person name="Suzuki M."/>
            <person name="Aoki J."/>
            <person name="Arakawa T."/>
            <person name="Iida J."/>
            <person name="Imamura K."/>
            <person name="Itoh M."/>
            <person name="Kato T."/>
            <person name="Kawaji H."/>
            <person name="Kawagashira N."/>
            <person name="Kawashima T."/>
            <person name="Kojima M."/>
            <person name="Kondo S."/>
            <person name="Konno H."/>
            <person name="Nakano K."/>
            <person name="Ninomiya N."/>
            <person name="Nishio T."/>
            <person name="Okada M."/>
            <person name="Plessy C."/>
            <person name="Shibata K."/>
            <person name="Shiraki T."/>
            <person name="Suzuki S."/>
            <person name="Tagami M."/>
            <person name="Waki K."/>
            <person name="Watahiki A."/>
            <person name="Okamura-Oho Y."/>
            <person name="Suzuki H."/>
            <person name="Kawai J."/>
            <person name="Hayashizaki Y."/>
        </authorList>
    </citation>
    <scope>NUCLEOTIDE SEQUENCE [LARGE SCALE MRNA]</scope>
    <source>
        <strain>C57BL/6J</strain>
    </source>
</reference>
<reference key="4">
    <citation type="submission" date="2005-07" db="EMBL/GenBank/DDBJ databases">
        <authorList>
            <person name="Mural R.J."/>
            <person name="Adams M.D."/>
            <person name="Myers E.W."/>
            <person name="Smith H.O."/>
            <person name="Venter J.C."/>
        </authorList>
    </citation>
    <scope>NUCLEOTIDE SEQUENCE [LARGE SCALE GENOMIC DNA]</scope>
</reference>
<reference key="5">
    <citation type="journal article" date="2009" name="Immunity">
        <title>The phagosomal proteome in interferon-gamma-activated macrophages.</title>
        <authorList>
            <person name="Trost M."/>
            <person name="English L."/>
            <person name="Lemieux S."/>
            <person name="Courcelles M."/>
            <person name="Desjardins M."/>
            <person name="Thibault P."/>
        </authorList>
    </citation>
    <scope>PHOSPHORYLATION [LARGE SCALE ANALYSIS] AT SER-144 AND SER-336</scope>
    <scope>IDENTIFICATION BY MASS SPECTROMETRY [LARGE SCALE ANALYSIS]</scope>
</reference>
<reference key="6">
    <citation type="journal article" date="2010" name="Cell">
        <title>A tissue-specific atlas of mouse protein phosphorylation and expression.</title>
        <authorList>
            <person name="Huttlin E.L."/>
            <person name="Jedrychowski M.P."/>
            <person name="Elias J.E."/>
            <person name="Goswami T."/>
            <person name="Rad R."/>
            <person name="Beausoleil S.A."/>
            <person name="Villen J."/>
            <person name="Haas W."/>
            <person name="Sowa M.E."/>
            <person name="Gygi S.P."/>
        </authorList>
    </citation>
    <scope>IDENTIFICATION BY MASS SPECTROMETRY [LARGE SCALE ANALYSIS]</scope>
    <source>
        <tissue>Brain</tissue>
        <tissue>Heart</tissue>
        <tissue>Kidney</tissue>
        <tissue>Lung</tissue>
        <tissue>Spleen</tissue>
        <tissue>Testis</tissue>
    </source>
</reference>
<reference key="7">
    <citation type="journal article" date="2013" name="Mol. Cell">
        <title>SIRT5-mediated lysine desuccinylation impacts diverse metabolic pathways.</title>
        <authorList>
            <person name="Park J."/>
            <person name="Chen Y."/>
            <person name="Tishkoff D.X."/>
            <person name="Peng C."/>
            <person name="Tan M."/>
            <person name="Dai L."/>
            <person name="Xie Z."/>
            <person name="Zhang Y."/>
            <person name="Zwaans B.M."/>
            <person name="Skinner M.E."/>
            <person name="Lombard D.B."/>
            <person name="Zhao Y."/>
        </authorList>
    </citation>
    <scope>ACETYLATION [LARGE SCALE ANALYSIS] AT LYS-256 AND LYS-263</scope>
    <scope>IDENTIFICATION BY MASS SPECTROMETRY [LARGE SCALE ANALYSIS]</scope>
    <source>
        <tissue>Embryonic fibroblast</tissue>
    </source>
</reference>
<reference key="8">
    <citation type="journal article" date="2014" name="Mol. Cell. Proteomics">
        <title>Immunoaffinity enrichment and mass spectrometry analysis of protein methylation.</title>
        <authorList>
            <person name="Guo A."/>
            <person name="Gu H."/>
            <person name="Zhou J."/>
            <person name="Mulhern D."/>
            <person name="Wang Y."/>
            <person name="Lee K.A."/>
            <person name="Yang V."/>
            <person name="Aguiar M."/>
            <person name="Kornhauser J."/>
            <person name="Jia X."/>
            <person name="Ren J."/>
            <person name="Beausoleil S.A."/>
            <person name="Silva J.C."/>
            <person name="Vemulapalli V."/>
            <person name="Bedford M.T."/>
            <person name="Comb M.J."/>
        </authorList>
    </citation>
    <scope>METHYLATION [LARGE SCALE ANALYSIS] AT ARG-244</scope>
    <scope>IDENTIFICATION BY MASS SPECTROMETRY [LARGE SCALE ANALYSIS]</scope>
    <source>
        <tissue>Brain</tissue>
        <tissue>Embryo</tissue>
    </source>
</reference>
<name>ZYX_MOUSE</name>
<comment type="function">
    <text evidence="1">Adhesion plaque protein. Binds alpha-actinin and the CRP protein. Important for targeting TES and ENA/VASP family members to focal adhesions and for the formation of actin-rich structures. May be a component of a signal transduction pathway that mediates adhesion-stimulated changes in gene expression (By similarity).</text>
</comment>
<comment type="subunit">
    <text evidence="1 2">Interacts, via the Pro-rich regions, with the EVH1 domains of ENAH, EVL and VASP. Interacts with the first LIM domain of TES. Interacts with SYNPO2 (By similarity).</text>
</comment>
<comment type="subcellular location">
    <subcellularLocation>
        <location evidence="1">Cytoplasm</location>
    </subcellularLocation>
    <subcellularLocation>
        <location evidence="1">Cytoplasm</location>
        <location evidence="1">Cytoskeleton</location>
    </subcellularLocation>
    <subcellularLocation>
        <location evidence="1">Cell junction</location>
        <location evidence="1">Focal adhesion</location>
    </subcellularLocation>
    <subcellularLocation>
        <location evidence="1">Nucleus</location>
    </subcellularLocation>
    <text evidence="1">Associates with the actin cytoskeleton near the adhesion plaques. Enters the nucleus in the presence of HESX1 (By similarity).</text>
</comment>
<comment type="similarity">
    <text evidence="5">Belongs to the zyxin/ajuba family.</text>
</comment>
<organism>
    <name type="scientific">Mus musculus</name>
    <name type="common">Mouse</name>
    <dbReference type="NCBI Taxonomy" id="10090"/>
    <lineage>
        <taxon>Eukaryota</taxon>
        <taxon>Metazoa</taxon>
        <taxon>Chordata</taxon>
        <taxon>Craniata</taxon>
        <taxon>Vertebrata</taxon>
        <taxon>Euteleostomi</taxon>
        <taxon>Mammalia</taxon>
        <taxon>Eutheria</taxon>
        <taxon>Euarchontoglires</taxon>
        <taxon>Glires</taxon>
        <taxon>Rodentia</taxon>
        <taxon>Myomorpha</taxon>
        <taxon>Muroidea</taxon>
        <taxon>Muridae</taxon>
        <taxon>Murinae</taxon>
        <taxon>Mus</taxon>
        <taxon>Mus</taxon>
    </lineage>
</organism>
<feature type="initiator methionine" description="Removed" evidence="2">
    <location>
        <position position="1"/>
    </location>
</feature>
<feature type="chain" id="PRO_0000075914" description="Zyxin">
    <location>
        <begin position="2"/>
        <end position="564"/>
    </location>
</feature>
<feature type="domain" description="LIM zinc-binding 1" evidence="3">
    <location>
        <begin position="376"/>
        <end position="435"/>
    </location>
</feature>
<feature type="domain" description="LIM zinc-binding 2" evidence="3">
    <location>
        <begin position="436"/>
        <end position="495"/>
    </location>
</feature>
<feature type="domain" description="LIM zinc-binding 3" evidence="3">
    <location>
        <begin position="496"/>
        <end position="562"/>
    </location>
</feature>
<feature type="region of interest" description="Disordered" evidence="4">
    <location>
        <begin position="30"/>
        <end position="141"/>
    </location>
</feature>
<feature type="region of interest" description="Disordered" evidence="4">
    <location>
        <begin position="162"/>
        <end position="344"/>
    </location>
</feature>
<feature type="compositionally biased region" description="Pro residues" evidence="4">
    <location>
        <begin position="63"/>
        <end position="78"/>
    </location>
</feature>
<feature type="compositionally biased region" description="Pro residues" evidence="4">
    <location>
        <begin position="93"/>
        <end position="109"/>
    </location>
</feature>
<feature type="compositionally biased region" description="Pro residues" evidence="4">
    <location>
        <begin position="174"/>
        <end position="189"/>
    </location>
</feature>
<feature type="compositionally biased region" description="Pro residues" evidence="4">
    <location>
        <begin position="197"/>
        <end position="214"/>
    </location>
</feature>
<feature type="compositionally biased region" description="Polar residues" evidence="4">
    <location>
        <begin position="234"/>
        <end position="243"/>
    </location>
</feature>
<feature type="compositionally biased region" description="Low complexity" evidence="4">
    <location>
        <begin position="255"/>
        <end position="275"/>
    </location>
</feature>
<feature type="compositionally biased region" description="Polar residues" evidence="4">
    <location>
        <begin position="294"/>
        <end position="310"/>
    </location>
</feature>
<feature type="compositionally biased region" description="Basic and acidic residues" evidence="4">
    <location>
        <begin position="311"/>
        <end position="322"/>
    </location>
</feature>
<feature type="modified residue" description="N-acetylalanine" evidence="2">
    <location>
        <position position="2"/>
    </location>
</feature>
<feature type="modified residue" description="Phosphoserine" evidence="2">
    <location>
        <position position="117"/>
    </location>
</feature>
<feature type="modified residue" description="Phosphoserine" evidence="6">
    <location>
        <position position="144"/>
    </location>
</feature>
<feature type="modified residue" description="Phosphoserine" evidence="2">
    <location>
        <position position="170"/>
    </location>
</feature>
<feature type="modified residue" description="Phosphoserine" evidence="2">
    <location>
        <position position="171"/>
    </location>
</feature>
<feature type="modified residue" description="Phosphothreonine" evidence="2">
    <location>
        <position position="180"/>
    </location>
</feature>
<feature type="modified residue" description="Asymmetric dimethylarginine" evidence="8">
    <location>
        <position position="244"/>
    </location>
</feature>
<feature type="modified residue" description="N6-acetyllysine" evidence="7">
    <location>
        <position position="256"/>
    </location>
</feature>
<feature type="modified residue" description="N6-acetyllysine" evidence="7">
    <location>
        <position position="263"/>
    </location>
</feature>
<feature type="modified residue" description="Phosphothreonine" evidence="2">
    <location>
        <position position="265"/>
    </location>
</feature>
<feature type="modified residue" description="N6-acetyllysine" evidence="2">
    <location>
        <position position="270"/>
    </location>
</feature>
<feature type="modified residue" description="Phosphoserine" evidence="2">
    <location>
        <position position="272"/>
    </location>
</feature>
<feature type="modified residue" description="Phosphoserine" evidence="2">
    <location>
        <position position="300"/>
    </location>
</feature>
<feature type="modified residue" description="Phosphoserine" evidence="6">
    <location>
        <position position="336"/>
    </location>
</feature>
<feature type="sequence conflict" description="In Ref. 1; CAA67510." evidence="5" ref="1">
    <original>A</original>
    <variation>R</variation>
    <location>
        <position position="215"/>
    </location>
</feature>
<feature type="sequence conflict" description="In Ref. 1; CAA67510." evidence="5" ref="1">
    <original>NQKMVPPDA</original>
    <variation>IKKWCLRMP</variation>
    <location>
        <begin position="284"/>
        <end position="292"/>
    </location>
</feature>
<feature type="sequence conflict" description="In Ref. 1; CAA67510." evidence="5" ref="1">
    <original>C</original>
    <variation>S</variation>
    <location>
        <position position="484"/>
    </location>
</feature>
<evidence type="ECO:0000250" key="1"/>
<evidence type="ECO:0000250" key="2">
    <source>
        <dbReference type="UniProtKB" id="Q15942"/>
    </source>
</evidence>
<evidence type="ECO:0000255" key="3">
    <source>
        <dbReference type="PROSITE-ProRule" id="PRU00125"/>
    </source>
</evidence>
<evidence type="ECO:0000256" key="4">
    <source>
        <dbReference type="SAM" id="MobiDB-lite"/>
    </source>
</evidence>
<evidence type="ECO:0000305" key="5"/>
<evidence type="ECO:0007744" key="6">
    <source>
    </source>
</evidence>
<evidence type="ECO:0007744" key="7">
    <source>
    </source>
</evidence>
<evidence type="ECO:0007744" key="8">
    <source>
    </source>
</evidence>
<keyword id="KW-0007">Acetylation</keyword>
<keyword id="KW-0130">Cell adhesion</keyword>
<keyword id="KW-0965">Cell junction</keyword>
<keyword id="KW-0963">Cytoplasm</keyword>
<keyword id="KW-0206">Cytoskeleton</keyword>
<keyword id="KW-0440">LIM domain</keyword>
<keyword id="KW-0479">Metal-binding</keyword>
<keyword id="KW-0488">Methylation</keyword>
<keyword id="KW-0539">Nucleus</keyword>
<keyword id="KW-0597">Phosphoprotein</keyword>
<keyword id="KW-1185">Reference proteome</keyword>
<keyword id="KW-0677">Repeat</keyword>
<keyword id="KW-0862">Zinc</keyword>
<proteinExistence type="evidence at protein level"/>
<sequence>MAAPRPPPAISVSVSAPAFYAPQKKFAPVVAPKPKVNPFRPGDSEPPVAAGAQRAQMGRVGEIPPPPPEDFPLPPPPLIGEGDDSEGALGGAFPPPPPPMIEEPFPPAPLEEDIFPSPPPPLEEEGGPEAPTQLPPQPREKVCSIDLEIDSLSSLLDDMTKNDPFKARVSSGYVPPPVATPFVPKPSTKPAPGGTAPLPPWKTPSSSQPPPQPQAKPQVQLHVQPQAKPHVQPQPVSSANTQPRGPLSQAPTPAPKFAPVAPKFTPVVSKFSPGAPSGPGPQPNQKMVPPDAPSSVSTGSPQPPSFTYAQQKEKPLVQEKQHPQPPPAQNQNQVRSPGGPGPLTLKEVEELEQLTQQLMQDMEHPQRQSVAVNESCGKCNQPLARAQPAVRALGQLFHITCFTCHQCQQQLQGQQFYSLEGAPYCEGCYTDTLEKCNTCGQPITDRMLRATGKAYHPQCFTCVVCACPLEGTSFIVDQANQPHCVPDYHKQYAPRCSVCSEPIMPEPGRDETVRVVALDKNFHMKCYKCEDCGKPLSIEADDNGCFPLDGHVLCRKCHSARAQT</sequence>